<protein>
    <recommendedName>
        <fullName>GDT1-like protein 3</fullName>
    </recommendedName>
</protein>
<name>GDT13_ORYSI</name>
<gene>
    <name type="ORF">OsI_36063</name>
</gene>
<proteinExistence type="inferred from homology"/>
<keyword id="KW-0472">Membrane</keyword>
<keyword id="KW-1185">Reference proteome</keyword>
<keyword id="KW-0732">Signal</keyword>
<keyword id="KW-0812">Transmembrane</keyword>
<keyword id="KW-1133">Transmembrane helix</keyword>
<comment type="subcellular location">
    <subcellularLocation>
        <location evidence="2">Membrane</location>
        <topology evidence="2">Multi-pass membrane protein</topology>
    </subcellularLocation>
</comment>
<comment type="similarity">
    <text evidence="2">Belongs to the GDT1 family.</text>
</comment>
<dbReference type="EMBL" id="CM000136">
    <property type="protein sequence ID" value="EAY80884.1"/>
    <property type="molecule type" value="Genomic_DNA"/>
</dbReference>
<dbReference type="EnsemblPlants" id="BGIOSGA035246-TA">
    <property type="protein sequence ID" value="BGIOSGA035246-PA"/>
    <property type="gene ID" value="BGIOSGA035246"/>
</dbReference>
<dbReference type="EnsemblPlants" id="OsGoSa_11g0013440.01">
    <property type="protein sequence ID" value="OsGoSa_11g0013440.01"/>
    <property type="gene ID" value="OsGoSa_11g0013440"/>
</dbReference>
<dbReference type="EnsemblPlants" id="OsIR64_11g0013630.01">
    <property type="protein sequence ID" value="OsIR64_11g0013630.01"/>
    <property type="gene ID" value="OsIR64_11g0013630"/>
</dbReference>
<dbReference type="EnsemblPlants" id="OsKYG_11g0013800.01">
    <property type="protein sequence ID" value="OsKYG_11g0013800.01"/>
    <property type="gene ID" value="OsKYG_11g0013800"/>
</dbReference>
<dbReference type="EnsemblPlants" id="OsLaMu_11g0013610.03">
    <property type="protein sequence ID" value="OsLaMu_11g0013610.03"/>
    <property type="gene ID" value="OsLaMu_11g0013610"/>
</dbReference>
<dbReference type="EnsemblPlants" id="OsLima_Ung0001880.03">
    <property type="protein sequence ID" value="OsLima_Ung0001880.03"/>
    <property type="gene ID" value="OsLima_Ung0001880"/>
</dbReference>
<dbReference type="EnsemblPlants" id="OsLiXu_11g0013280.01">
    <property type="protein sequence ID" value="OsLiXu_11g0013280.01"/>
    <property type="gene ID" value="OsLiXu_11g0013280"/>
</dbReference>
<dbReference type="EnsemblPlants" id="OsMH63_11G014070_05">
    <property type="protein sequence ID" value="OsMH63_11G014070_05"/>
    <property type="gene ID" value="OsMH63_11G014070"/>
</dbReference>
<dbReference type="EnsemblPlants" id="OsPr106_11g0013650.01">
    <property type="protein sequence ID" value="OsPr106_11g0013650.01"/>
    <property type="gene ID" value="OsPr106_11g0013650"/>
</dbReference>
<dbReference type="EnsemblPlants" id="OsZS97_11G013640_04">
    <property type="protein sequence ID" value="OsZS97_11G013640_04"/>
    <property type="gene ID" value="OsZS97_11G013640"/>
</dbReference>
<dbReference type="Gramene" id="BGIOSGA035246-TA">
    <property type="protein sequence ID" value="BGIOSGA035246-PA"/>
    <property type="gene ID" value="BGIOSGA035246"/>
</dbReference>
<dbReference type="Gramene" id="OsGoSa_11g0013440.01">
    <property type="protein sequence ID" value="OsGoSa_11g0013440.01"/>
    <property type="gene ID" value="OsGoSa_11g0013440"/>
</dbReference>
<dbReference type="Gramene" id="OsIR64_11g0013630.01">
    <property type="protein sequence ID" value="OsIR64_11g0013630.01"/>
    <property type="gene ID" value="OsIR64_11g0013630"/>
</dbReference>
<dbReference type="Gramene" id="OsKYG_11g0013800.01">
    <property type="protein sequence ID" value="OsKYG_11g0013800.01"/>
    <property type="gene ID" value="OsKYG_11g0013800"/>
</dbReference>
<dbReference type="Gramene" id="OsLaMu_11g0013610.03">
    <property type="protein sequence ID" value="OsLaMu_11g0013610.03"/>
    <property type="gene ID" value="OsLaMu_11g0013610"/>
</dbReference>
<dbReference type="Gramene" id="OsLima_Ung0001880.03">
    <property type="protein sequence ID" value="OsLima_Ung0001880.03"/>
    <property type="gene ID" value="OsLima_Ung0001880"/>
</dbReference>
<dbReference type="Gramene" id="OsLiXu_11g0013280.01">
    <property type="protein sequence ID" value="OsLiXu_11g0013280.01"/>
    <property type="gene ID" value="OsLiXu_11g0013280"/>
</dbReference>
<dbReference type="Gramene" id="OsMH63_11G014070_05">
    <property type="protein sequence ID" value="OsMH63_11G014070_05"/>
    <property type="gene ID" value="OsMH63_11G014070"/>
</dbReference>
<dbReference type="Gramene" id="OsPr106_11g0013650.01">
    <property type="protein sequence ID" value="OsPr106_11g0013650.01"/>
    <property type="gene ID" value="OsPr106_11g0013650"/>
</dbReference>
<dbReference type="Gramene" id="OsZS97_11G013640_04">
    <property type="protein sequence ID" value="OsZS97_11G013640_04"/>
    <property type="gene ID" value="OsZS97_11G013640"/>
</dbReference>
<dbReference type="HOGENOM" id="CLU_040186_0_1_1"/>
<dbReference type="OMA" id="CSNVIMG"/>
<dbReference type="OrthoDB" id="442680at2759"/>
<dbReference type="Proteomes" id="UP000007015">
    <property type="component" value="Chromosome 11"/>
</dbReference>
<dbReference type="GO" id="GO:0005794">
    <property type="term" value="C:Golgi apparatus"/>
    <property type="evidence" value="ECO:0007669"/>
    <property type="project" value="TreeGrafter"/>
</dbReference>
<dbReference type="GO" id="GO:0016020">
    <property type="term" value="C:membrane"/>
    <property type="evidence" value="ECO:0007669"/>
    <property type="project" value="UniProtKB-SubCell"/>
</dbReference>
<dbReference type="GO" id="GO:0015085">
    <property type="term" value="F:calcium ion transmembrane transporter activity"/>
    <property type="evidence" value="ECO:0007669"/>
    <property type="project" value="TreeGrafter"/>
</dbReference>
<dbReference type="GO" id="GO:0005384">
    <property type="term" value="F:manganese ion transmembrane transporter activity"/>
    <property type="evidence" value="ECO:0007669"/>
    <property type="project" value="TreeGrafter"/>
</dbReference>
<dbReference type="GO" id="GO:0032468">
    <property type="term" value="P:Golgi calcium ion homeostasis"/>
    <property type="evidence" value="ECO:0007669"/>
    <property type="project" value="TreeGrafter"/>
</dbReference>
<dbReference type="GO" id="GO:0032472">
    <property type="term" value="P:Golgi calcium ion transport"/>
    <property type="evidence" value="ECO:0007669"/>
    <property type="project" value="TreeGrafter"/>
</dbReference>
<dbReference type="InterPro" id="IPR001727">
    <property type="entry name" value="GDT1-like"/>
</dbReference>
<dbReference type="PANTHER" id="PTHR12608:SF5">
    <property type="entry name" value="GDT1-LIKE PROTEIN 3"/>
    <property type="match status" value="1"/>
</dbReference>
<dbReference type="PANTHER" id="PTHR12608">
    <property type="entry name" value="TRANSMEMBRANE PROTEIN HTP-1 RELATED"/>
    <property type="match status" value="1"/>
</dbReference>
<dbReference type="Pfam" id="PF01169">
    <property type="entry name" value="GDT1"/>
    <property type="match status" value="2"/>
</dbReference>
<evidence type="ECO:0000255" key="1"/>
<evidence type="ECO:0000305" key="2"/>
<accession>A2ZE50</accession>
<sequence length="279" mass="29681">MDPNPRLLILLVLLAFSATVAVAEDGESTGGSKVSLGRRAGGFLHGLKKEAVVEGDHGVALDEVGPGLFDALFASLSMILVSEIGDETFIIAALMAMRHPKSIVLSGALSALYVMTVLSTGLGRIVPNLISRKHTNSAATVLYLFFGLRLLYIAWKSDPKGSQKKEMEEVEEKLESGQGKSTLRRFFGRFCTPIFLEAFILTFLAEWGDRSQIATIALATHKNAIGVAVGASLGHTVCTSLAVIGGSMLASKISQRTVATIGGVLFLGFSVSSYFYPPL</sequence>
<reference key="1">
    <citation type="journal article" date="2005" name="PLoS Biol.">
        <title>The genomes of Oryza sativa: a history of duplications.</title>
        <authorList>
            <person name="Yu J."/>
            <person name="Wang J."/>
            <person name="Lin W."/>
            <person name="Li S."/>
            <person name="Li H."/>
            <person name="Zhou J."/>
            <person name="Ni P."/>
            <person name="Dong W."/>
            <person name="Hu S."/>
            <person name="Zeng C."/>
            <person name="Zhang J."/>
            <person name="Zhang Y."/>
            <person name="Li R."/>
            <person name="Xu Z."/>
            <person name="Li S."/>
            <person name="Li X."/>
            <person name="Zheng H."/>
            <person name="Cong L."/>
            <person name="Lin L."/>
            <person name="Yin J."/>
            <person name="Geng J."/>
            <person name="Li G."/>
            <person name="Shi J."/>
            <person name="Liu J."/>
            <person name="Lv H."/>
            <person name="Li J."/>
            <person name="Wang J."/>
            <person name="Deng Y."/>
            <person name="Ran L."/>
            <person name="Shi X."/>
            <person name="Wang X."/>
            <person name="Wu Q."/>
            <person name="Li C."/>
            <person name="Ren X."/>
            <person name="Wang J."/>
            <person name="Wang X."/>
            <person name="Li D."/>
            <person name="Liu D."/>
            <person name="Zhang X."/>
            <person name="Ji Z."/>
            <person name="Zhao W."/>
            <person name="Sun Y."/>
            <person name="Zhang Z."/>
            <person name="Bao J."/>
            <person name="Han Y."/>
            <person name="Dong L."/>
            <person name="Ji J."/>
            <person name="Chen P."/>
            <person name="Wu S."/>
            <person name="Liu J."/>
            <person name="Xiao Y."/>
            <person name="Bu D."/>
            <person name="Tan J."/>
            <person name="Yang L."/>
            <person name="Ye C."/>
            <person name="Zhang J."/>
            <person name="Xu J."/>
            <person name="Zhou Y."/>
            <person name="Yu Y."/>
            <person name="Zhang B."/>
            <person name="Zhuang S."/>
            <person name="Wei H."/>
            <person name="Liu B."/>
            <person name="Lei M."/>
            <person name="Yu H."/>
            <person name="Li Y."/>
            <person name="Xu H."/>
            <person name="Wei S."/>
            <person name="He X."/>
            <person name="Fang L."/>
            <person name="Zhang Z."/>
            <person name="Zhang Y."/>
            <person name="Huang X."/>
            <person name="Su Z."/>
            <person name="Tong W."/>
            <person name="Li J."/>
            <person name="Tong Z."/>
            <person name="Li S."/>
            <person name="Ye J."/>
            <person name="Wang L."/>
            <person name="Fang L."/>
            <person name="Lei T."/>
            <person name="Chen C.-S."/>
            <person name="Chen H.-C."/>
            <person name="Xu Z."/>
            <person name="Li H."/>
            <person name="Huang H."/>
            <person name="Zhang F."/>
            <person name="Xu H."/>
            <person name="Li N."/>
            <person name="Zhao C."/>
            <person name="Li S."/>
            <person name="Dong L."/>
            <person name="Huang Y."/>
            <person name="Li L."/>
            <person name="Xi Y."/>
            <person name="Qi Q."/>
            <person name="Li W."/>
            <person name="Zhang B."/>
            <person name="Hu W."/>
            <person name="Zhang Y."/>
            <person name="Tian X."/>
            <person name="Jiao Y."/>
            <person name="Liang X."/>
            <person name="Jin J."/>
            <person name="Gao L."/>
            <person name="Zheng W."/>
            <person name="Hao B."/>
            <person name="Liu S.-M."/>
            <person name="Wang W."/>
            <person name="Yuan L."/>
            <person name="Cao M."/>
            <person name="McDermott J."/>
            <person name="Samudrala R."/>
            <person name="Wang J."/>
            <person name="Wong G.K.-S."/>
            <person name="Yang H."/>
        </authorList>
    </citation>
    <scope>NUCLEOTIDE SEQUENCE [LARGE SCALE GENOMIC DNA]</scope>
    <source>
        <strain>cv. 93-11</strain>
    </source>
</reference>
<feature type="signal peptide" evidence="1">
    <location>
        <begin position="1"/>
        <end position="23"/>
    </location>
</feature>
<feature type="chain" id="PRO_0000398772" description="GDT1-like protein 3">
    <location>
        <begin position="24"/>
        <end position="279"/>
    </location>
</feature>
<feature type="transmembrane region" description="Helical" evidence="1">
    <location>
        <begin position="64"/>
        <end position="84"/>
    </location>
</feature>
<feature type="transmembrane region" description="Helical" evidence="1">
    <location>
        <begin position="103"/>
        <end position="123"/>
    </location>
</feature>
<feature type="transmembrane region" description="Helical" evidence="1">
    <location>
        <begin position="135"/>
        <end position="155"/>
    </location>
</feature>
<feature type="transmembrane region" description="Helical" evidence="1">
    <location>
        <begin position="186"/>
        <end position="206"/>
    </location>
</feature>
<feature type="transmembrane region" description="Helical" evidence="1">
    <location>
        <begin position="224"/>
        <end position="244"/>
    </location>
</feature>
<feature type="transmembrane region" description="Helical" evidence="1">
    <location>
        <begin position="258"/>
        <end position="278"/>
    </location>
</feature>
<organism>
    <name type="scientific">Oryza sativa subsp. indica</name>
    <name type="common">Rice</name>
    <dbReference type="NCBI Taxonomy" id="39946"/>
    <lineage>
        <taxon>Eukaryota</taxon>
        <taxon>Viridiplantae</taxon>
        <taxon>Streptophyta</taxon>
        <taxon>Embryophyta</taxon>
        <taxon>Tracheophyta</taxon>
        <taxon>Spermatophyta</taxon>
        <taxon>Magnoliopsida</taxon>
        <taxon>Liliopsida</taxon>
        <taxon>Poales</taxon>
        <taxon>Poaceae</taxon>
        <taxon>BOP clade</taxon>
        <taxon>Oryzoideae</taxon>
        <taxon>Oryzeae</taxon>
        <taxon>Oryzinae</taxon>
        <taxon>Oryza</taxon>
        <taxon>Oryza sativa</taxon>
    </lineage>
</organism>